<gene>
    <name evidence="1" type="primary">speD</name>
    <name type="ordered locus">GK1400</name>
</gene>
<organism>
    <name type="scientific">Geobacillus kaustophilus (strain HTA426)</name>
    <dbReference type="NCBI Taxonomy" id="235909"/>
    <lineage>
        <taxon>Bacteria</taxon>
        <taxon>Bacillati</taxon>
        <taxon>Bacillota</taxon>
        <taxon>Bacilli</taxon>
        <taxon>Bacillales</taxon>
        <taxon>Anoxybacillaceae</taxon>
        <taxon>Geobacillus</taxon>
        <taxon>Geobacillus thermoleovorans group</taxon>
    </lineage>
</organism>
<dbReference type="EC" id="4.1.1.50" evidence="1"/>
<dbReference type="EMBL" id="BA000043">
    <property type="protein sequence ID" value="BAD75685.1"/>
    <property type="molecule type" value="Genomic_DNA"/>
</dbReference>
<dbReference type="RefSeq" id="WP_011230896.1">
    <property type="nucleotide sequence ID" value="NC_006510.1"/>
</dbReference>
<dbReference type="SMR" id="Q5L051"/>
<dbReference type="STRING" id="235909.GK1400"/>
<dbReference type="KEGG" id="gka:GK1400"/>
<dbReference type="eggNOG" id="COG1586">
    <property type="taxonomic scope" value="Bacteria"/>
</dbReference>
<dbReference type="HOGENOM" id="CLU_092007_0_0_9"/>
<dbReference type="UniPathway" id="UPA00331">
    <property type="reaction ID" value="UER00451"/>
</dbReference>
<dbReference type="Proteomes" id="UP000001172">
    <property type="component" value="Chromosome"/>
</dbReference>
<dbReference type="GO" id="GO:0005829">
    <property type="term" value="C:cytosol"/>
    <property type="evidence" value="ECO:0007669"/>
    <property type="project" value="TreeGrafter"/>
</dbReference>
<dbReference type="GO" id="GO:0004014">
    <property type="term" value="F:adenosylmethionine decarboxylase activity"/>
    <property type="evidence" value="ECO:0007669"/>
    <property type="project" value="UniProtKB-UniRule"/>
</dbReference>
<dbReference type="GO" id="GO:0008295">
    <property type="term" value="P:spermidine biosynthetic process"/>
    <property type="evidence" value="ECO:0007669"/>
    <property type="project" value="UniProtKB-UniRule"/>
</dbReference>
<dbReference type="Gene3D" id="3.60.90.10">
    <property type="entry name" value="S-adenosylmethionine decarboxylase"/>
    <property type="match status" value="1"/>
</dbReference>
<dbReference type="HAMAP" id="MF_00465">
    <property type="entry name" value="AdoMetDC_2"/>
    <property type="match status" value="1"/>
</dbReference>
<dbReference type="InterPro" id="IPR003826">
    <property type="entry name" value="AdoMetDC_fam_prok"/>
</dbReference>
<dbReference type="InterPro" id="IPR009165">
    <property type="entry name" value="S-AdoMet_deCO2ase_bac"/>
</dbReference>
<dbReference type="InterPro" id="IPR016067">
    <property type="entry name" value="S-AdoMet_deCO2ase_core"/>
</dbReference>
<dbReference type="NCBIfam" id="TIGR03331">
    <property type="entry name" value="SAM_DCase_Eco"/>
    <property type="match status" value="1"/>
</dbReference>
<dbReference type="PANTHER" id="PTHR33866">
    <property type="entry name" value="S-ADENOSYLMETHIONINE DECARBOXYLASE PROENZYME"/>
    <property type="match status" value="1"/>
</dbReference>
<dbReference type="PANTHER" id="PTHR33866:SF1">
    <property type="entry name" value="S-ADENOSYLMETHIONINE DECARBOXYLASE PROENZYME"/>
    <property type="match status" value="1"/>
</dbReference>
<dbReference type="Pfam" id="PF02675">
    <property type="entry name" value="AdoMet_dc"/>
    <property type="match status" value="1"/>
</dbReference>
<dbReference type="PIRSF" id="PIRSF001356">
    <property type="entry name" value="SAM_decarboxylas"/>
    <property type="match status" value="1"/>
</dbReference>
<dbReference type="SUPFAM" id="SSF56276">
    <property type="entry name" value="S-adenosylmethionine decarboxylase"/>
    <property type="match status" value="1"/>
</dbReference>
<evidence type="ECO:0000255" key="1">
    <source>
        <dbReference type="HAMAP-Rule" id="MF_00465"/>
    </source>
</evidence>
<protein>
    <recommendedName>
        <fullName evidence="1">S-adenosylmethionine decarboxylase proenzyme</fullName>
        <shortName evidence="1">AdoMetDC</shortName>
        <shortName evidence="1">SAMDC</shortName>
        <ecNumber evidence="1">4.1.1.50</ecNumber>
    </recommendedName>
    <component>
        <recommendedName>
            <fullName evidence="1">S-adenosylmethionine decarboxylase beta chain</fullName>
        </recommendedName>
    </component>
    <component>
        <recommendedName>
            <fullName evidence="1">S-adenosylmethionine decarboxylase alpha chain</fullName>
        </recommendedName>
    </component>
</protein>
<reference key="1">
    <citation type="journal article" date="2004" name="Nucleic Acids Res.">
        <title>Thermoadaptation trait revealed by the genome sequence of thermophilic Geobacillus kaustophilus.</title>
        <authorList>
            <person name="Takami H."/>
            <person name="Takaki Y."/>
            <person name="Chee G.-J."/>
            <person name="Nishi S."/>
            <person name="Shimamura S."/>
            <person name="Suzuki H."/>
            <person name="Matsui S."/>
            <person name="Uchiyama I."/>
        </authorList>
    </citation>
    <scope>NUCLEOTIDE SEQUENCE [LARGE SCALE GENOMIC DNA]</scope>
    <source>
        <strain>HTA426</strain>
    </source>
</reference>
<name>SPED_GEOKA</name>
<proteinExistence type="inferred from homology"/>
<feature type="chain" id="PRO_0000364379" description="S-adenosylmethionine decarboxylase beta chain" evidence="1">
    <location>
        <begin position="1"/>
        <end position="110"/>
    </location>
</feature>
<feature type="chain" id="PRO_0000364380" description="S-adenosylmethionine decarboxylase alpha chain" evidence="1">
    <location>
        <begin position="111"/>
        <end position="264"/>
    </location>
</feature>
<feature type="active site" description="Schiff-base intermediate with substrate; via pyruvic acid" evidence="1">
    <location>
        <position position="111"/>
    </location>
</feature>
<feature type="active site" description="Proton acceptor; for processing activity" evidence="1">
    <location>
        <position position="116"/>
    </location>
</feature>
<feature type="active site" description="Proton donor; for catalytic activity" evidence="1">
    <location>
        <position position="139"/>
    </location>
</feature>
<feature type="site" description="Cleavage (non-hydrolytic); by autolysis" evidence="1">
    <location>
        <begin position="110"/>
        <end position="111"/>
    </location>
</feature>
<feature type="modified residue" description="Pyruvic acid (Ser); by autocatalysis" evidence="1">
    <location>
        <position position="111"/>
    </location>
</feature>
<sequence>MNETPRVKLHGFNNLTKSLSFNMYDICYTKTAKEREAYIEYIDDVYNAERLTNILKRVADMIGAHVLNIAKQDYVPQGASVAMLVSEGPVVEVPEDDGPLPEAVVLSLDKSHITVHTYPEYHPNDGISTFRADIDVVTCGEISPLKALDYLIHSFDADIMIIDYRVRGFTRDIHGYKLFIDHDITSIQDYIPEHIREKYDMIDVNIYQENIFHTKCKLKQFDLDNYLFGYAKEDLSEQEANETTAKLRREMDEIFYGKNMPNTV</sequence>
<comment type="function">
    <text evidence="1">Catalyzes the decarboxylation of S-adenosylmethionine to S-adenosylmethioninamine (dcAdoMet), the propylamine donor required for the synthesis of the polyamines spermine and spermidine from the diamine putrescine.</text>
</comment>
<comment type="catalytic activity">
    <reaction evidence="1">
        <text>S-adenosyl-L-methionine + H(+) = S-adenosyl 3-(methylsulfanyl)propylamine + CO2</text>
        <dbReference type="Rhea" id="RHEA:15981"/>
        <dbReference type="ChEBI" id="CHEBI:15378"/>
        <dbReference type="ChEBI" id="CHEBI:16526"/>
        <dbReference type="ChEBI" id="CHEBI:57443"/>
        <dbReference type="ChEBI" id="CHEBI:59789"/>
        <dbReference type="EC" id="4.1.1.50"/>
    </reaction>
</comment>
<comment type="cofactor">
    <cofactor evidence="1">
        <name>pyruvate</name>
        <dbReference type="ChEBI" id="CHEBI:15361"/>
    </cofactor>
    <text evidence="1">Binds 1 pyruvoyl group covalently per subunit.</text>
</comment>
<comment type="pathway">
    <text evidence="1">Amine and polyamine biosynthesis; S-adenosylmethioninamine biosynthesis; S-adenosylmethioninamine from S-adenosyl-L-methionine: step 1/1.</text>
</comment>
<comment type="subunit">
    <text evidence="1">Heterooctamer of four alpha and four beta chains arranged as a tetramer of alpha/beta heterodimers.</text>
</comment>
<comment type="PTM">
    <text evidence="1">Is synthesized initially as an inactive proenzyme. Formation of the active enzyme involves a self-maturation process in which the active site pyruvoyl group is generated from an internal serine residue via an autocatalytic post-translational modification. Two non-identical subunits are generated from the proenzyme in this reaction, and the pyruvate is formed at the N-terminus of the alpha chain, which is derived from the carboxyl end of the proenzyme. The post-translation cleavage follows an unusual pathway, termed non-hydrolytic serinolysis, in which the side chain hydroxyl group of the serine supplies its oxygen atom to form the C-terminus of the beta chain, while the remainder of the serine residue undergoes an oxidative deamination to produce ammonia and the pyruvoyl group blocking the N-terminus of the alpha chain.</text>
</comment>
<comment type="similarity">
    <text evidence="1">Belongs to the prokaryotic AdoMetDC family. Type 2 subfamily.</text>
</comment>
<keyword id="KW-0068">Autocatalytic cleavage</keyword>
<keyword id="KW-0210">Decarboxylase</keyword>
<keyword id="KW-0456">Lyase</keyword>
<keyword id="KW-0620">Polyamine biosynthesis</keyword>
<keyword id="KW-0670">Pyruvate</keyword>
<keyword id="KW-1185">Reference proteome</keyword>
<keyword id="KW-0949">S-adenosyl-L-methionine</keyword>
<keyword id="KW-0704">Schiff base</keyword>
<keyword id="KW-0745">Spermidine biosynthesis</keyword>
<keyword id="KW-0865">Zymogen</keyword>
<accession>Q5L051</accession>